<name>RL3_HAEIN</name>
<keyword id="KW-0488">Methylation</keyword>
<keyword id="KW-1185">Reference proteome</keyword>
<keyword id="KW-0687">Ribonucleoprotein</keyword>
<keyword id="KW-0689">Ribosomal protein</keyword>
<keyword id="KW-0694">RNA-binding</keyword>
<keyword id="KW-0699">rRNA-binding</keyword>
<sequence length="208" mass="22364">MIGLVGRKVGMTRIFNEDGVSVPVTVIEIEANRVTQVKTLENDGYTAVQVTTGSKKANRVTKPEAGHFVKAGVEAGRGLWEFRTEGEEFTLGQEINVDIFADVKKVDVTGTSKGKGFQGGVKRWNFRTQDATHGNSLSHRVLGSIGQNQTPGRVFKGKKMAGHLGAERVTVQSLEVVRVDAERKLLLVKGSVPGAINGDVIVKPAVKA</sequence>
<evidence type="ECO:0000255" key="1">
    <source>
        <dbReference type="HAMAP-Rule" id="MF_01325"/>
    </source>
</evidence>
<evidence type="ECO:0000305" key="2"/>
<gene>
    <name evidence="1" type="primary">rplC</name>
    <name evidence="1" type="synonym">rpl3</name>
    <name type="ordered locus">HI_0777</name>
</gene>
<accession>P44344</accession>
<proteinExistence type="inferred from homology"/>
<dbReference type="EMBL" id="L42023">
    <property type="protein sequence ID" value="AAC22436.1"/>
    <property type="molecule type" value="Genomic_DNA"/>
</dbReference>
<dbReference type="EMBL" id="U37797">
    <property type="protein sequence ID" value="AAB41510.1"/>
    <property type="molecule type" value="Genomic_DNA"/>
</dbReference>
<dbReference type="PIR" id="E64092">
    <property type="entry name" value="E64092"/>
</dbReference>
<dbReference type="RefSeq" id="NP_438936.1">
    <property type="nucleotide sequence ID" value="NC_000907.1"/>
</dbReference>
<dbReference type="SMR" id="P44344"/>
<dbReference type="STRING" id="71421.HI_0777"/>
<dbReference type="EnsemblBacteria" id="AAC22436">
    <property type="protein sequence ID" value="AAC22436"/>
    <property type="gene ID" value="HI_0777"/>
</dbReference>
<dbReference type="KEGG" id="hin:HI_0777"/>
<dbReference type="PATRIC" id="fig|71421.8.peg.816"/>
<dbReference type="eggNOG" id="COG0087">
    <property type="taxonomic scope" value="Bacteria"/>
</dbReference>
<dbReference type="HOGENOM" id="CLU_044142_4_1_6"/>
<dbReference type="OrthoDB" id="9806135at2"/>
<dbReference type="PhylomeDB" id="P44344"/>
<dbReference type="BioCyc" id="HINF71421:G1GJ1-817-MONOMER"/>
<dbReference type="PRO" id="PR:P44344"/>
<dbReference type="Proteomes" id="UP000000579">
    <property type="component" value="Chromosome"/>
</dbReference>
<dbReference type="GO" id="GO:0022625">
    <property type="term" value="C:cytosolic large ribosomal subunit"/>
    <property type="evidence" value="ECO:0000318"/>
    <property type="project" value="GO_Central"/>
</dbReference>
<dbReference type="GO" id="GO:0019843">
    <property type="term" value="F:rRNA binding"/>
    <property type="evidence" value="ECO:0007669"/>
    <property type="project" value="UniProtKB-UniRule"/>
</dbReference>
<dbReference type="GO" id="GO:0003735">
    <property type="term" value="F:structural constituent of ribosome"/>
    <property type="evidence" value="ECO:0000318"/>
    <property type="project" value="GO_Central"/>
</dbReference>
<dbReference type="GO" id="GO:0006412">
    <property type="term" value="P:translation"/>
    <property type="evidence" value="ECO:0007669"/>
    <property type="project" value="UniProtKB-UniRule"/>
</dbReference>
<dbReference type="FunFam" id="2.40.30.10:FF:000004">
    <property type="entry name" value="50S ribosomal protein L3"/>
    <property type="match status" value="1"/>
</dbReference>
<dbReference type="FunFam" id="3.30.160.810:FF:000001">
    <property type="entry name" value="50S ribosomal protein L3"/>
    <property type="match status" value="1"/>
</dbReference>
<dbReference type="Gene3D" id="3.30.160.810">
    <property type="match status" value="1"/>
</dbReference>
<dbReference type="Gene3D" id="2.40.30.10">
    <property type="entry name" value="Translation factors"/>
    <property type="match status" value="1"/>
</dbReference>
<dbReference type="HAMAP" id="MF_01325_B">
    <property type="entry name" value="Ribosomal_uL3_B"/>
    <property type="match status" value="1"/>
</dbReference>
<dbReference type="InterPro" id="IPR000597">
    <property type="entry name" value="Ribosomal_uL3"/>
</dbReference>
<dbReference type="InterPro" id="IPR019927">
    <property type="entry name" value="Ribosomal_uL3_bac/org-type"/>
</dbReference>
<dbReference type="InterPro" id="IPR019926">
    <property type="entry name" value="Ribosomal_uL3_CS"/>
</dbReference>
<dbReference type="InterPro" id="IPR009000">
    <property type="entry name" value="Transl_B-barrel_sf"/>
</dbReference>
<dbReference type="NCBIfam" id="TIGR03625">
    <property type="entry name" value="L3_bact"/>
    <property type="match status" value="1"/>
</dbReference>
<dbReference type="PANTHER" id="PTHR11229">
    <property type="entry name" value="50S RIBOSOMAL PROTEIN L3"/>
    <property type="match status" value="1"/>
</dbReference>
<dbReference type="PANTHER" id="PTHR11229:SF16">
    <property type="entry name" value="LARGE RIBOSOMAL SUBUNIT PROTEIN UL3C"/>
    <property type="match status" value="1"/>
</dbReference>
<dbReference type="Pfam" id="PF00297">
    <property type="entry name" value="Ribosomal_L3"/>
    <property type="match status" value="1"/>
</dbReference>
<dbReference type="SUPFAM" id="SSF50447">
    <property type="entry name" value="Translation proteins"/>
    <property type="match status" value="1"/>
</dbReference>
<dbReference type="PROSITE" id="PS00474">
    <property type="entry name" value="RIBOSOMAL_L3"/>
    <property type="match status" value="1"/>
</dbReference>
<comment type="function">
    <text evidence="1">One of the primary rRNA binding proteins, it binds directly near the 3'-end of the 23S rRNA, where it nucleates assembly of the 50S subunit.</text>
</comment>
<comment type="subunit">
    <text evidence="1">Part of the 50S ribosomal subunit. Forms a cluster with proteins L14 and L19.</text>
</comment>
<comment type="PTM">
    <text evidence="1">Methylated by PrmB.</text>
</comment>
<comment type="similarity">
    <text evidence="1">Belongs to the universal ribosomal protein uL3 family.</text>
</comment>
<feature type="chain" id="PRO_0000077106" description="Large ribosomal subunit protein uL3">
    <location>
        <begin position="1"/>
        <end position="208"/>
    </location>
</feature>
<feature type="modified residue" description="N5-methylglutamine" evidence="1">
    <location>
        <position position="149"/>
    </location>
</feature>
<protein>
    <recommendedName>
        <fullName evidence="1">Large ribosomal subunit protein uL3</fullName>
    </recommendedName>
    <alternativeName>
        <fullName evidence="2">50S ribosomal protein L3</fullName>
    </alternativeName>
</protein>
<reference key="1">
    <citation type="journal article" date="1995" name="Science">
        <title>Whole-genome random sequencing and assembly of Haemophilus influenzae Rd.</title>
        <authorList>
            <person name="Fleischmann R.D."/>
            <person name="Adams M.D."/>
            <person name="White O."/>
            <person name="Clayton R.A."/>
            <person name="Kirkness E.F."/>
            <person name="Kerlavage A.R."/>
            <person name="Bult C.J."/>
            <person name="Tomb J.-F."/>
            <person name="Dougherty B.A."/>
            <person name="Merrick J.M."/>
            <person name="McKenney K."/>
            <person name="Sutton G.G."/>
            <person name="FitzHugh W."/>
            <person name="Fields C.A."/>
            <person name="Gocayne J.D."/>
            <person name="Scott J.D."/>
            <person name="Shirley R."/>
            <person name="Liu L.-I."/>
            <person name="Glodek A."/>
            <person name="Kelley J.M."/>
            <person name="Weidman J.F."/>
            <person name="Phillips C.A."/>
            <person name="Spriggs T."/>
            <person name="Hedblom E."/>
            <person name="Cotton M.D."/>
            <person name="Utterback T.R."/>
            <person name="Hanna M.C."/>
            <person name="Nguyen D.T."/>
            <person name="Saudek D.M."/>
            <person name="Brandon R.C."/>
            <person name="Fine L.D."/>
            <person name="Fritchman J.L."/>
            <person name="Fuhrmann J.L."/>
            <person name="Geoghagen N.S.M."/>
            <person name="Gnehm C.L."/>
            <person name="McDonald L.A."/>
            <person name="Small K.V."/>
            <person name="Fraser C.M."/>
            <person name="Smith H.O."/>
            <person name="Venter J.C."/>
        </authorList>
    </citation>
    <scope>NUCLEOTIDE SEQUENCE [LARGE SCALE GENOMIC DNA]</scope>
    <source>
        <strain>ATCC 51907 / DSM 11121 / KW20 / Rd</strain>
    </source>
</reference>
<reference key="2">
    <citation type="submission" date="1995-10" db="EMBL/GenBank/DDBJ databases">
        <authorList>
            <person name="Zengel J.M."/>
            <person name="Vorozheikina D."/>
            <person name="Li X."/>
            <person name="Lindahl L."/>
        </authorList>
    </citation>
    <scope>NUCLEOTIDE SEQUENCE [GENOMIC DNA] OF 192-208</scope>
</reference>
<organism>
    <name type="scientific">Haemophilus influenzae (strain ATCC 51907 / DSM 11121 / KW20 / Rd)</name>
    <dbReference type="NCBI Taxonomy" id="71421"/>
    <lineage>
        <taxon>Bacteria</taxon>
        <taxon>Pseudomonadati</taxon>
        <taxon>Pseudomonadota</taxon>
        <taxon>Gammaproteobacteria</taxon>
        <taxon>Pasteurellales</taxon>
        <taxon>Pasteurellaceae</taxon>
        <taxon>Haemophilus</taxon>
    </lineage>
</organism>